<evidence type="ECO:0000250" key="1"/>
<evidence type="ECO:0000250" key="2">
    <source>
        <dbReference type="UniProtKB" id="P22449"/>
    </source>
</evidence>
<evidence type="ECO:0000250" key="3">
    <source>
        <dbReference type="UniProtKB" id="P49698"/>
    </source>
</evidence>
<evidence type="ECO:0000255" key="4">
    <source>
        <dbReference type="PROSITE-ProRule" id="PRU00407"/>
    </source>
</evidence>
<evidence type="ECO:0000255" key="5">
    <source>
        <dbReference type="PROSITE-ProRule" id="PRU01189"/>
    </source>
</evidence>
<evidence type="ECO:0000256" key="6">
    <source>
        <dbReference type="SAM" id="MobiDB-lite"/>
    </source>
</evidence>
<evidence type="ECO:0000305" key="7"/>
<keyword id="KW-0238">DNA-binding</keyword>
<keyword id="KW-0479">Metal-binding</keyword>
<keyword id="KW-0539">Nucleus</keyword>
<keyword id="KW-0597">Phosphoprotein</keyword>
<keyword id="KW-0675">Receptor</keyword>
<keyword id="KW-1185">Reference proteome</keyword>
<keyword id="KW-0804">Transcription</keyword>
<keyword id="KW-0805">Transcription regulation</keyword>
<keyword id="KW-0862">Zinc</keyword>
<keyword id="KW-0863">Zinc-finger</keyword>
<protein>
    <recommendedName>
        <fullName>Hepatocyte nuclear factor 4-gamma</fullName>
        <shortName>HNF-4-gamma</shortName>
    </recommendedName>
    <alternativeName>
        <fullName>Nuclear receptor subfamily 2 group A member 2</fullName>
    </alternativeName>
</protein>
<sequence>MNTTDSGVNCLCAICGDRATGKHYGASSCDGCKGFFRRSIRKSHVYSCRFSRQCVVDKDKRNQCRYCRLRKCFRAGMKKEAVQNERDRISTRRSTYEGSNIPSINTLAQAEVRSCQISVPSPSSSTDINIKKIASISDVCESMKQQLLVLVEWAKYIPAFCELPLDDQVALLRAHAGEHLLLGATKRSMMYKDILLLGNHYVIHRNSCEVEVSRVANRVLDELVRPFQEIQIDDNEYACLKAIVFFDPDAKGLSDPVKIKNMRFQVQISLEDYINDRQYDSRGRFGELLLLLPTLQSITWQMIEQIQFVKLFGMVKIDNLLQEMLLGGAANDGSHLHHPMHPHLSQDPLTGQTILLGPMSTLVHTDQIATPETPLPSPPQGSGQEPYKITANQASVISHQSLSKQKQL</sequence>
<name>HNF4G_MOUSE</name>
<comment type="function">
    <text evidence="1">Transcription factor. Has a lower transcription activation potential than HNF4-alpha (By similarity).</text>
</comment>
<comment type="subcellular location">
    <subcellularLocation>
        <location evidence="4">Nucleus</location>
    </subcellularLocation>
</comment>
<comment type="similarity">
    <text evidence="7">Belongs to the nuclear hormone receptor family. NR2 subfamily.</text>
</comment>
<comment type="sequence caution" evidence="7">
    <conflict type="erroneous initiation">
        <sequence resource="EMBL-CDS" id="CAB43724"/>
    </conflict>
</comment>
<accession>Q9WUU6</accession>
<organism>
    <name type="scientific">Mus musculus</name>
    <name type="common">Mouse</name>
    <dbReference type="NCBI Taxonomy" id="10090"/>
    <lineage>
        <taxon>Eukaryota</taxon>
        <taxon>Metazoa</taxon>
        <taxon>Chordata</taxon>
        <taxon>Craniata</taxon>
        <taxon>Vertebrata</taxon>
        <taxon>Euteleostomi</taxon>
        <taxon>Mammalia</taxon>
        <taxon>Eutheria</taxon>
        <taxon>Euarchontoglires</taxon>
        <taxon>Glires</taxon>
        <taxon>Rodentia</taxon>
        <taxon>Myomorpha</taxon>
        <taxon>Muroidea</taxon>
        <taxon>Muridae</taxon>
        <taxon>Murinae</taxon>
        <taxon>Mus</taxon>
        <taxon>Mus</taxon>
    </lineage>
</organism>
<gene>
    <name type="primary">Hnf4g</name>
    <name type="synonym">Nr2a2</name>
</gene>
<feature type="chain" id="PRO_0000053563" description="Hepatocyte nuclear factor 4-gamma">
    <location>
        <begin position="1"/>
        <end position="408"/>
    </location>
</feature>
<feature type="domain" description="NR LBD" evidence="5">
    <location>
        <begin position="99"/>
        <end position="328"/>
    </location>
</feature>
<feature type="DNA-binding region" description="Nuclear receptor" evidence="4">
    <location>
        <begin position="9"/>
        <end position="84"/>
    </location>
</feature>
<feature type="zinc finger region" description="NR C4-type" evidence="4">
    <location>
        <begin position="12"/>
        <end position="32"/>
    </location>
</feature>
<feature type="zinc finger region" description="NR C4-type" evidence="4">
    <location>
        <begin position="48"/>
        <end position="72"/>
    </location>
</feature>
<feature type="region of interest" description="Disordered" evidence="6">
    <location>
        <begin position="369"/>
        <end position="408"/>
    </location>
</feature>
<feature type="compositionally biased region" description="Polar residues" evidence="6">
    <location>
        <begin position="390"/>
        <end position="408"/>
    </location>
</feature>
<feature type="modified residue" description="Phosphoserine" evidence="2">
    <location>
        <position position="94"/>
    </location>
</feature>
<feature type="modified residue" description="Phosphothreonine" evidence="3">
    <location>
        <position position="370"/>
    </location>
</feature>
<feature type="modified residue" description="Phosphothreonine" evidence="3">
    <location>
        <position position="373"/>
    </location>
</feature>
<feature type="modified residue" description="Phosphoserine" evidence="3">
    <location>
        <position position="377"/>
    </location>
</feature>
<dbReference type="EMBL" id="AJ242626">
    <property type="protein sequence ID" value="CAB43724.1"/>
    <property type="status" value="ALT_INIT"/>
    <property type="molecule type" value="mRNA"/>
</dbReference>
<dbReference type="CCDS" id="CCDS17226.1"/>
<dbReference type="RefSeq" id="NP_038948.2">
    <property type="nucleotide sequence ID" value="NM_013920.3"/>
</dbReference>
<dbReference type="SMR" id="Q9WUU6"/>
<dbReference type="BioGRID" id="206019">
    <property type="interactions" value="6"/>
</dbReference>
<dbReference type="FunCoup" id="Q9WUU6">
    <property type="interactions" value="392"/>
</dbReference>
<dbReference type="IntAct" id="Q9WUU6">
    <property type="interactions" value="6"/>
</dbReference>
<dbReference type="STRING" id="10090.ENSMUSP00000104030"/>
<dbReference type="iPTMnet" id="Q9WUU6"/>
<dbReference type="PhosphoSitePlus" id="Q9WUU6"/>
<dbReference type="PaxDb" id="10090-ENSMUSP00000104031"/>
<dbReference type="ProteomicsDB" id="269608"/>
<dbReference type="DNASU" id="30942"/>
<dbReference type="GeneID" id="30942"/>
<dbReference type="KEGG" id="mmu:30942"/>
<dbReference type="AGR" id="MGI:1353604"/>
<dbReference type="CTD" id="3174"/>
<dbReference type="MGI" id="MGI:1353604">
    <property type="gene designation" value="Hnf4g"/>
</dbReference>
<dbReference type="eggNOG" id="KOG4215">
    <property type="taxonomic scope" value="Eukaryota"/>
</dbReference>
<dbReference type="InParanoid" id="Q9WUU6"/>
<dbReference type="Reactome" id="R-MMU-383280">
    <property type="pathway name" value="Nuclear Receptor transcription pathway"/>
</dbReference>
<dbReference type="BioGRID-ORCS" id="30942">
    <property type="hits" value="2 hits in 77 CRISPR screens"/>
</dbReference>
<dbReference type="ChiTaRS" id="Hnf4g">
    <property type="organism name" value="mouse"/>
</dbReference>
<dbReference type="PRO" id="PR:Q9WUU6"/>
<dbReference type="Proteomes" id="UP000000589">
    <property type="component" value="Unplaced"/>
</dbReference>
<dbReference type="RNAct" id="Q9WUU6">
    <property type="molecule type" value="protein"/>
</dbReference>
<dbReference type="GO" id="GO:0005829">
    <property type="term" value="C:cytosol"/>
    <property type="evidence" value="ECO:0000304"/>
    <property type="project" value="Reactome"/>
</dbReference>
<dbReference type="GO" id="GO:0005634">
    <property type="term" value="C:nucleus"/>
    <property type="evidence" value="ECO:0007669"/>
    <property type="project" value="UniProtKB-SubCell"/>
</dbReference>
<dbReference type="GO" id="GO:0005667">
    <property type="term" value="C:transcription regulator complex"/>
    <property type="evidence" value="ECO:0000250"/>
    <property type="project" value="MGI"/>
</dbReference>
<dbReference type="GO" id="GO:0003700">
    <property type="term" value="F:DNA-binding transcription factor activity"/>
    <property type="evidence" value="ECO:0007669"/>
    <property type="project" value="InterPro"/>
</dbReference>
<dbReference type="GO" id="GO:0000978">
    <property type="term" value="F:RNA polymerase II cis-regulatory region sequence-specific DNA binding"/>
    <property type="evidence" value="ECO:0007669"/>
    <property type="project" value="InterPro"/>
</dbReference>
<dbReference type="GO" id="GO:0008270">
    <property type="term" value="F:zinc ion binding"/>
    <property type="evidence" value="ECO:0007669"/>
    <property type="project" value="UniProtKB-KW"/>
</dbReference>
<dbReference type="GO" id="GO:0010467">
    <property type="term" value="P:gene expression"/>
    <property type="evidence" value="ECO:0000315"/>
    <property type="project" value="MGI"/>
</dbReference>
<dbReference type="GO" id="GO:0045893">
    <property type="term" value="P:positive regulation of DNA-templated transcription"/>
    <property type="evidence" value="ECO:0000314"/>
    <property type="project" value="MGI"/>
</dbReference>
<dbReference type="CDD" id="cd06960">
    <property type="entry name" value="NR_DBD_HNF4A"/>
    <property type="match status" value="1"/>
</dbReference>
<dbReference type="CDD" id="cd06931">
    <property type="entry name" value="NR_LBD_HNF4_like"/>
    <property type="match status" value="1"/>
</dbReference>
<dbReference type="FunFam" id="1.10.565.10:FF:000007">
    <property type="entry name" value="Hepatocyte nuclear factor 4 alpha"/>
    <property type="match status" value="1"/>
</dbReference>
<dbReference type="FunFam" id="3.30.50.10:FF:000012">
    <property type="entry name" value="Hepatocyte nuclear factor 4, alpha"/>
    <property type="match status" value="1"/>
</dbReference>
<dbReference type="Gene3D" id="3.30.50.10">
    <property type="entry name" value="Erythroid Transcription Factor GATA-1, subunit A"/>
    <property type="match status" value="1"/>
</dbReference>
<dbReference type="Gene3D" id="1.10.565.10">
    <property type="entry name" value="Retinoid X Receptor"/>
    <property type="match status" value="1"/>
</dbReference>
<dbReference type="InterPro" id="IPR049636">
    <property type="entry name" value="HNF4-like_DBD"/>
</dbReference>
<dbReference type="InterPro" id="IPR049635">
    <property type="entry name" value="HNF4_LBD"/>
</dbReference>
<dbReference type="InterPro" id="IPR035500">
    <property type="entry name" value="NHR-like_dom_sf"/>
</dbReference>
<dbReference type="InterPro" id="IPR000536">
    <property type="entry name" value="Nucl_hrmn_rcpt_lig-bd"/>
</dbReference>
<dbReference type="InterPro" id="IPR050274">
    <property type="entry name" value="Nuclear_hormone_rcpt_NR2"/>
</dbReference>
<dbReference type="InterPro" id="IPR001723">
    <property type="entry name" value="Nuclear_hrmn_rcpt"/>
</dbReference>
<dbReference type="InterPro" id="IPR001628">
    <property type="entry name" value="Znf_hrmn_rcpt"/>
</dbReference>
<dbReference type="InterPro" id="IPR013088">
    <property type="entry name" value="Znf_NHR/GATA"/>
</dbReference>
<dbReference type="PANTHER" id="PTHR24083">
    <property type="entry name" value="NUCLEAR HORMONE RECEPTOR"/>
    <property type="match status" value="1"/>
</dbReference>
<dbReference type="Pfam" id="PF00104">
    <property type="entry name" value="Hormone_recep"/>
    <property type="match status" value="1"/>
</dbReference>
<dbReference type="Pfam" id="PF00105">
    <property type="entry name" value="zf-C4"/>
    <property type="match status" value="1"/>
</dbReference>
<dbReference type="PRINTS" id="PR01282">
    <property type="entry name" value="COUPTNFACTOR"/>
</dbReference>
<dbReference type="PRINTS" id="PR00398">
    <property type="entry name" value="STRDHORMONER"/>
</dbReference>
<dbReference type="PRINTS" id="PR00047">
    <property type="entry name" value="STROIDFINGER"/>
</dbReference>
<dbReference type="SMART" id="SM00430">
    <property type="entry name" value="HOLI"/>
    <property type="match status" value="1"/>
</dbReference>
<dbReference type="SMART" id="SM00399">
    <property type="entry name" value="ZnF_C4"/>
    <property type="match status" value="1"/>
</dbReference>
<dbReference type="SUPFAM" id="SSF57716">
    <property type="entry name" value="Glucocorticoid receptor-like (DNA-binding domain)"/>
    <property type="match status" value="1"/>
</dbReference>
<dbReference type="SUPFAM" id="SSF48508">
    <property type="entry name" value="Nuclear receptor ligand-binding domain"/>
    <property type="match status" value="1"/>
</dbReference>
<dbReference type="PROSITE" id="PS51843">
    <property type="entry name" value="NR_LBD"/>
    <property type="match status" value="1"/>
</dbReference>
<dbReference type="PROSITE" id="PS00031">
    <property type="entry name" value="NUCLEAR_REC_DBD_1"/>
    <property type="match status" value="1"/>
</dbReference>
<dbReference type="PROSITE" id="PS51030">
    <property type="entry name" value="NUCLEAR_REC_DBD_2"/>
    <property type="match status" value="1"/>
</dbReference>
<proteinExistence type="evidence at transcript level"/>
<reference key="1">
    <citation type="journal article" date="2000" name="Biochim. Biophys. Acta">
        <title>Primary structure, chromosomal mapping, expression and transcriptional activity of murine hepatocyte nuclear factor 4gamma.</title>
        <authorList>
            <person name="Taraviras S."/>
            <person name="Mantamadiotis T."/>
            <person name="Dong-Si T."/>
            <person name="Mincheva A."/>
            <person name="Lichter P."/>
            <person name="Drewes T."/>
            <person name="Ryffel G.U."/>
            <person name="Monaghan A.P."/>
            <person name="Schutz G."/>
        </authorList>
    </citation>
    <scope>NUCLEOTIDE SEQUENCE [MRNA]</scope>
</reference>